<feature type="chain" id="PRO_0000140543" description="Chorismate synthase 1">
    <location>
        <begin position="1"/>
        <end position="390"/>
    </location>
</feature>
<feature type="region of interest" description="Disordered" evidence="2">
    <location>
        <begin position="95"/>
        <end position="117"/>
    </location>
</feature>
<feature type="binding site" evidence="1">
    <location>
        <position position="39"/>
    </location>
    <ligand>
        <name>NADP(+)</name>
        <dbReference type="ChEBI" id="CHEBI:58349"/>
    </ligand>
</feature>
<feature type="binding site" evidence="1">
    <location>
        <position position="45"/>
    </location>
    <ligand>
        <name>NADP(+)</name>
        <dbReference type="ChEBI" id="CHEBI:58349"/>
    </ligand>
</feature>
<feature type="binding site" evidence="1">
    <location>
        <begin position="132"/>
        <end position="134"/>
    </location>
    <ligand>
        <name>FMN</name>
        <dbReference type="ChEBI" id="CHEBI:58210"/>
    </ligand>
</feature>
<feature type="binding site" evidence="1">
    <location>
        <begin position="253"/>
        <end position="254"/>
    </location>
    <ligand>
        <name>FMN</name>
        <dbReference type="ChEBI" id="CHEBI:58210"/>
    </ligand>
</feature>
<feature type="binding site" evidence="1">
    <location>
        <position position="298"/>
    </location>
    <ligand>
        <name>FMN</name>
        <dbReference type="ChEBI" id="CHEBI:58210"/>
    </ligand>
</feature>
<feature type="binding site" evidence="1">
    <location>
        <begin position="313"/>
        <end position="317"/>
    </location>
    <ligand>
        <name>FMN</name>
        <dbReference type="ChEBI" id="CHEBI:58210"/>
    </ligand>
</feature>
<feature type="binding site" evidence="1">
    <location>
        <position position="339"/>
    </location>
    <ligand>
        <name>FMN</name>
        <dbReference type="ChEBI" id="CHEBI:58210"/>
    </ligand>
</feature>
<sequence length="390" mass="42413">MRYITAGESHGPQLTTIIEGVPAGLSLVADDINEELARRQKGYGRGRRMQIETDQVQILSGVRHGETLGSPIALVVENRDFAHWTKIMGAEPLTEQEEKEMKRKVTKPRPGHADLNGAIKYGHRDMRNVLERSSARETTVRVAAGAVAKKVLAELGIKVAGHVIEIGGVQAKEITYSSIEELKSITEASPVRCLDDEAGNQMMKAIDDAKANGDSIGGIVEVIVEGMPIGVGSYVHYDRKLDAKLAAAIMSINAFKGVEIGIGFEAAHRPGSEVHDEILWNEEHGYTRRTNNAGGLEGGMTTGMPIVVRGVMKPIPTLYKPLQSVDIDTKEPFTASIERSDSCAVPAASVVAEAVVAWELATALIEQFGLDRMELIRENIEKHNEYARGF</sequence>
<dbReference type="EC" id="4.2.3.5" evidence="1"/>
<dbReference type="EMBL" id="AE016877">
    <property type="protein sequence ID" value="AAP08496.1"/>
    <property type="molecule type" value="Genomic_DNA"/>
</dbReference>
<dbReference type="RefSeq" id="NP_831295.1">
    <property type="nucleotide sequence ID" value="NC_004722.1"/>
</dbReference>
<dbReference type="SMR" id="Q81FQ3"/>
<dbReference type="STRING" id="226900.BC_1516"/>
<dbReference type="KEGG" id="bce:BC1516"/>
<dbReference type="PATRIC" id="fig|226900.8.peg.1493"/>
<dbReference type="HOGENOM" id="CLU_034547_2_0_9"/>
<dbReference type="OrthoDB" id="9771806at2"/>
<dbReference type="UniPathway" id="UPA00053">
    <property type="reaction ID" value="UER00090"/>
</dbReference>
<dbReference type="Proteomes" id="UP000001417">
    <property type="component" value="Chromosome"/>
</dbReference>
<dbReference type="GO" id="GO:0005829">
    <property type="term" value="C:cytosol"/>
    <property type="evidence" value="ECO:0000318"/>
    <property type="project" value="GO_Central"/>
</dbReference>
<dbReference type="GO" id="GO:0004107">
    <property type="term" value="F:chorismate synthase activity"/>
    <property type="evidence" value="ECO:0000318"/>
    <property type="project" value="GO_Central"/>
</dbReference>
<dbReference type="GO" id="GO:0010181">
    <property type="term" value="F:FMN binding"/>
    <property type="evidence" value="ECO:0000318"/>
    <property type="project" value="GO_Central"/>
</dbReference>
<dbReference type="GO" id="GO:0008652">
    <property type="term" value="P:amino acid biosynthetic process"/>
    <property type="evidence" value="ECO:0007669"/>
    <property type="project" value="UniProtKB-KW"/>
</dbReference>
<dbReference type="GO" id="GO:0009073">
    <property type="term" value="P:aromatic amino acid family biosynthetic process"/>
    <property type="evidence" value="ECO:0000318"/>
    <property type="project" value="GO_Central"/>
</dbReference>
<dbReference type="GO" id="GO:0009423">
    <property type="term" value="P:chorismate biosynthetic process"/>
    <property type="evidence" value="ECO:0000318"/>
    <property type="project" value="GO_Central"/>
</dbReference>
<dbReference type="CDD" id="cd07304">
    <property type="entry name" value="Chorismate_synthase"/>
    <property type="match status" value="1"/>
</dbReference>
<dbReference type="FunFam" id="3.60.150.10:FF:000002">
    <property type="entry name" value="Chorismate synthase"/>
    <property type="match status" value="1"/>
</dbReference>
<dbReference type="Gene3D" id="3.60.150.10">
    <property type="entry name" value="Chorismate synthase AroC"/>
    <property type="match status" value="1"/>
</dbReference>
<dbReference type="HAMAP" id="MF_00300">
    <property type="entry name" value="Chorismate_synth"/>
    <property type="match status" value="1"/>
</dbReference>
<dbReference type="InterPro" id="IPR000453">
    <property type="entry name" value="Chorismate_synth"/>
</dbReference>
<dbReference type="InterPro" id="IPR035904">
    <property type="entry name" value="Chorismate_synth_AroC_sf"/>
</dbReference>
<dbReference type="InterPro" id="IPR020541">
    <property type="entry name" value="Chorismate_synthase_CS"/>
</dbReference>
<dbReference type="NCBIfam" id="TIGR00033">
    <property type="entry name" value="aroC"/>
    <property type="match status" value="1"/>
</dbReference>
<dbReference type="NCBIfam" id="NF003793">
    <property type="entry name" value="PRK05382.1"/>
    <property type="match status" value="1"/>
</dbReference>
<dbReference type="PANTHER" id="PTHR21085">
    <property type="entry name" value="CHORISMATE SYNTHASE"/>
    <property type="match status" value="1"/>
</dbReference>
<dbReference type="PANTHER" id="PTHR21085:SF0">
    <property type="entry name" value="CHORISMATE SYNTHASE"/>
    <property type="match status" value="1"/>
</dbReference>
<dbReference type="Pfam" id="PF01264">
    <property type="entry name" value="Chorismate_synt"/>
    <property type="match status" value="1"/>
</dbReference>
<dbReference type="PIRSF" id="PIRSF001456">
    <property type="entry name" value="Chorismate_synth"/>
    <property type="match status" value="1"/>
</dbReference>
<dbReference type="SUPFAM" id="SSF103263">
    <property type="entry name" value="Chorismate synthase, AroC"/>
    <property type="match status" value="1"/>
</dbReference>
<dbReference type="PROSITE" id="PS00787">
    <property type="entry name" value="CHORISMATE_SYNTHASE_1"/>
    <property type="match status" value="1"/>
</dbReference>
<dbReference type="PROSITE" id="PS00788">
    <property type="entry name" value="CHORISMATE_SYNTHASE_2"/>
    <property type="match status" value="1"/>
</dbReference>
<dbReference type="PROSITE" id="PS00789">
    <property type="entry name" value="CHORISMATE_SYNTHASE_3"/>
    <property type="match status" value="1"/>
</dbReference>
<keyword id="KW-0028">Amino-acid biosynthesis</keyword>
<keyword id="KW-0057">Aromatic amino acid biosynthesis</keyword>
<keyword id="KW-0274">FAD</keyword>
<keyword id="KW-0285">Flavoprotein</keyword>
<keyword id="KW-0288">FMN</keyword>
<keyword id="KW-0456">Lyase</keyword>
<keyword id="KW-0521">NADP</keyword>
<keyword id="KW-1185">Reference proteome</keyword>
<comment type="function">
    <text evidence="1">Catalyzes the anti-1,4-elimination of the C-3 phosphate and the C-6 proR hydrogen from 5-enolpyruvylshikimate-3-phosphate (EPSP) to yield chorismate, which is the branch point compound that serves as the starting substrate for the three terminal pathways of aromatic amino acid biosynthesis. This reaction introduces a second double bond into the aromatic ring system.</text>
</comment>
<comment type="catalytic activity">
    <reaction evidence="1">
        <text>5-O-(1-carboxyvinyl)-3-phosphoshikimate = chorismate + phosphate</text>
        <dbReference type="Rhea" id="RHEA:21020"/>
        <dbReference type="ChEBI" id="CHEBI:29748"/>
        <dbReference type="ChEBI" id="CHEBI:43474"/>
        <dbReference type="ChEBI" id="CHEBI:57701"/>
        <dbReference type="EC" id="4.2.3.5"/>
    </reaction>
</comment>
<comment type="cofactor">
    <cofactor evidence="1">
        <name>FMNH2</name>
        <dbReference type="ChEBI" id="CHEBI:57618"/>
    </cofactor>
    <text evidence="1">Reduced FMN (FMNH(2)).</text>
</comment>
<comment type="pathway">
    <text evidence="1">Metabolic intermediate biosynthesis; chorismate biosynthesis; chorismate from D-erythrose 4-phosphate and phosphoenolpyruvate: step 7/7.</text>
</comment>
<comment type="subunit">
    <text evidence="1">Homotetramer.</text>
</comment>
<comment type="similarity">
    <text evidence="1">Belongs to the chorismate synthase family.</text>
</comment>
<evidence type="ECO:0000255" key="1">
    <source>
        <dbReference type="HAMAP-Rule" id="MF_00300"/>
    </source>
</evidence>
<evidence type="ECO:0000256" key="2">
    <source>
        <dbReference type="SAM" id="MobiDB-lite"/>
    </source>
</evidence>
<name>AROC1_BACCR</name>
<reference key="1">
    <citation type="journal article" date="2003" name="Nature">
        <title>Genome sequence of Bacillus cereus and comparative analysis with Bacillus anthracis.</title>
        <authorList>
            <person name="Ivanova N."/>
            <person name="Sorokin A."/>
            <person name="Anderson I."/>
            <person name="Galleron N."/>
            <person name="Candelon B."/>
            <person name="Kapatral V."/>
            <person name="Bhattacharyya A."/>
            <person name="Reznik G."/>
            <person name="Mikhailova N."/>
            <person name="Lapidus A."/>
            <person name="Chu L."/>
            <person name="Mazur M."/>
            <person name="Goltsman E."/>
            <person name="Larsen N."/>
            <person name="D'Souza M."/>
            <person name="Walunas T."/>
            <person name="Grechkin Y."/>
            <person name="Pusch G."/>
            <person name="Haselkorn R."/>
            <person name="Fonstein M."/>
            <person name="Ehrlich S.D."/>
            <person name="Overbeek R."/>
            <person name="Kyrpides N.C."/>
        </authorList>
    </citation>
    <scope>NUCLEOTIDE SEQUENCE [LARGE SCALE GENOMIC DNA]</scope>
    <source>
        <strain>ATCC 14579 / DSM 31 / CCUG 7414 / JCM 2152 / NBRC 15305 / NCIMB 9373 / NCTC 2599 / NRRL B-3711</strain>
    </source>
</reference>
<protein>
    <recommendedName>
        <fullName evidence="1">Chorismate synthase 1</fullName>
        <shortName evidence="1">CS 1</shortName>
        <ecNumber evidence="1">4.2.3.5</ecNumber>
    </recommendedName>
    <alternativeName>
        <fullName evidence="1">5-enolpyruvylshikimate-3-phosphate phospholyase 1</fullName>
    </alternativeName>
</protein>
<accession>Q81FQ3</accession>
<proteinExistence type="inferred from homology"/>
<gene>
    <name evidence="1" type="primary">aroC1</name>
    <name type="ordered locus">BC_1516</name>
</gene>
<organism>
    <name type="scientific">Bacillus cereus (strain ATCC 14579 / DSM 31 / CCUG 7414 / JCM 2152 / NBRC 15305 / NCIMB 9373 / NCTC 2599 / NRRL B-3711)</name>
    <dbReference type="NCBI Taxonomy" id="226900"/>
    <lineage>
        <taxon>Bacteria</taxon>
        <taxon>Bacillati</taxon>
        <taxon>Bacillota</taxon>
        <taxon>Bacilli</taxon>
        <taxon>Bacillales</taxon>
        <taxon>Bacillaceae</taxon>
        <taxon>Bacillus</taxon>
        <taxon>Bacillus cereus group</taxon>
    </lineage>
</organism>